<accession>Q9SYB0</accession>
<accession>Q9ZRT0</accession>
<gene>
    <name evidence="3 5" type="ordered locus">At1g61740</name>
    <name evidence="4" type="ORF">T13M11.10</name>
</gene>
<protein>
    <recommendedName>
        <fullName evidence="5">Sulfite exporter TauE/SafE family protein 2</fullName>
    </recommendedName>
</protein>
<evidence type="ECO:0000255" key="1"/>
<evidence type="ECO:0000305" key="2"/>
<evidence type="ECO:0000312" key="3">
    <source>
        <dbReference type="Araport" id="AT1G61740"/>
    </source>
</evidence>
<evidence type="ECO:0000312" key="4">
    <source>
        <dbReference type="EMBL" id="AAD21419.1"/>
    </source>
</evidence>
<evidence type="ECO:0000312" key="5">
    <source>
        <dbReference type="EMBL" id="AEE33881.1"/>
    </source>
</evidence>
<keyword id="KW-0472">Membrane</keyword>
<keyword id="KW-1185">Reference proteome</keyword>
<keyword id="KW-0812">Transmembrane</keyword>
<keyword id="KW-1133">Transmembrane helix</keyword>
<keyword id="KW-0813">Transport</keyword>
<name>TAUE2_ARATH</name>
<reference key="1">
    <citation type="journal article" date="2000" name="Nature">
        <title>Sequence and analysis of chromosome 1 of the plant Arabidopsis thaliana.</title>
        <authorList>
            <person name="Theologis A."/>
            <person name="Ecker J.R."/>
            <person name="Palm C.J."/>
            <person name="Federspiel N.A."/>
            <person name="Kaul S."/>
            <person name="White O."/>
            <person name="Alonso J."/>
            <person name="Altafi H."/>
            <person name="Araujo R."/>
            <person name="Bowman C.L."/>
            <person name="Brooks S.Y."/>
            <person name="Buehler E."/>
            <person name="Chan A."/>
            <person name="Chao Q."/>
            <person name="Chen H."/>
            <person name="Cheuk R.F."/>
            <person name="Chin C.W."/>
            <person name="Chung M.K."/>
            <person name="Conn L."/>
            <person name="Conway A.B."/>
            <person name="Conway A.R."/>
            <person name="Creasy T.H."/>
            <person name="Dewar K."/>
            <person name="Dunn P."/>
            <person name="Etgu P."/>
            <person name="Feldblyum T.V."/>
            <person name="Feng J.-D."/>
            <person name="Fong B."/>
            <person name="Fujii C.Y."/>
            <person name="Gill J.E."/>
            <person name="Goldsmith A.D."/>
            <person name="Haas B."/>
            <person name="Hansen N.F."/>
            <person name="Hughes B."/>
            <person name="Huizar L."/>
            <person name="Hunter J.L."/>
            <person name="Jenkins J."/>
            <person name="Johnson-Hopson C."/>
            <person name="Khan S."/>
            <person name="Khaykin E."/>
            <person name="Kim C.J."/>
            <person name="Koo H.L."/>
            <person name="Kremenetskaia I."/>
            <person name="Kurtz D.B."/>
            <person name="Kwan A."/>
            <person name="Lam B."/>
            <person name="Langin-Hooper S."/>
            <person name="Lee A."/>
            <person name="Lee J.M."/>
            <person name="Lenz C.A."/>
            <person name="Li J.H."/>
            <person name="Li Y.-P."/>
            <person name="Lin X."/>
            <person name="Liu S.X."/>
            <person name="Liu Z.A."/>
            <person name="Luros J.S."/>
            <person name="Maiti R."/>
            <person name="Marziali A."/>
            <person name="Militscher J."/>
            <person name="Miranda M."/>
            <person name="Nguyen M."/>
            <person name="Nierman W.C."/>
            <person name="Osborne B.I."/>
            <person name="Pai G."/>
            <person name="Peterson J."/>
            <person name="Pham P.K."/>
            <person name="Rizzo M."/>
            <person name="Rooney T."/>
            <person name="Rowley D."/>
            <person name="Sakano H."/>
            <person name="Salzberg S.L."/>
            <person name="Schwartz J.R."/>
            <person name="Shinn P."/>
            <person name="Southwick A.M."/>
            <person name="Sun H."/>
            <person name="Tallon L.J."/>
            <person name="Tambunga G."/>
            <person name="Toriumi M.J."/>
            <person name="Town C.D."/>
            <person name="Utterback T."/>
            <person name="Van Aken S."/>
            <person name="Vaysberg M."/>
            <person name="Vysotskaia V.S."/>
            <person name="Walker M."/>
            <person name="Wu D."/>
            <person name="Yu G."/>
            <person name="Fraser C.M."/>
            <person name="Venter J.C."/>
            <person name="Davis R.W."/>
        </authorList>
    </citation>
    <scope>NUCLEOTIDE SEQUENCE [LARGE SCALE GENOMIC DNA]</scope>
    <source>
        <strain>cv. Columbia</strain>
    </source>
</reference>
<reference key="2">
    <citation type="journal article" date="2017" name="Plant J.">
        <title>Araport11: a complete reannotation of the Arabidopsis thaliana reference genome.</title>
        <authorList>
            <person name="Cheng C.Y."/>
            <person name="Krishnakumar V."/>
            <person name="Chan A.P."/>
            <person name="Thibaud-Nissen F."/>
            <person name="Schobel S."/>
            <person name="Town C.D."/>
        </authorList>
    </citation>
    <scope>GENOME REANNOTATION</scope>
    <source>
        <strain>cv. Columbia</strain>
    </source>
</reference>
<reference key="3">
    <citation type="journal article" date="2003" name="Science">
        <title>Empirical analysis of transcriptional activity in the Arabidopsis genome.</title>
        <authorList>
            <person name="Yamada K."/>
            <person name="Lim J."/>
            <person name="Dale J.M."/>
            <person name="Chen H."/>
            <person name="Shinn P."/>
            <person name="Palm C.J."/>
            <person name="Southwick A.M."/>
            <person name="Wu H.C."/>
            <person name="Kim C.J."/>
            <person name="Nguyen M."/>
            <person name="Pham P.K."/>
            <person name="Cheuk R.F."/>
            <person name="Karlin-Newmann G."/>
            <person name="Liu S.X."/>
            <person name="Lam B."/>
            <person name="Sakano H."/>
            <person name="Wu T."/>
            <person name="Yu G."/>
            <person name="Miranda M."/>
            <person name="Quach H.L."/>
            <person name="Tripp M."/>
            <person name="Chang C.H."/>
            <person name="Lee J.M."/>
            <person name="Toriumi M.J."/>
            <person name="Chan M.M."/>
            <person name="Tang C.C."/>
            <person name="Onodera C.S."/>
            <person name="Deng J.M."/>
            <person name="Akiyama K."/>
            <person name="Ansari Y."/>
            <person name="Arakawa T."/>
            <person name="Banh J."/>
            <person name="Banno F."/>
            <person name="Bowser L."/>
            <person name="Brooks S.Y."/>
            <person name="Carninci P."/>
            <person name="Chao Q."/>
            <person name="Choy N."/>
            <person name="Enju A."/>
            <person name="Goldsmith A.D."/>
            <person name="Gurjal M."/>
            <person name="Hansen N.F."/>
            <person name="Hayashizaki Y."/>
            <person name="Johnson-Hopson C."/>
            <person name="Hsuan V.W."/>
            <person name="Iida K."/>
            <person name="Karnes M."/>
            <person name="Khan S."/>
            <person name="Koesema E."/>
            <person name="Ishida J."/>
            <person name="Jiang P.X."/>
            <person name="Jones T."/>
            <person name="Kawai J."/>
            <person name="Kamiya A."/>
            <person name="Meyers C."/>
            <person name="Nakajima M."/>
            <person name="Narusaka M."/>
            <person name="Seki M."/>
            <person name="Sakurai T."/>
            <person name="Satou M."/>
            <person name="Tamse R."/>
            <person name="Vaysberg M."/>
            <person name="Wallender E.K."/>
            <person name="Wong C."/>
            <person name="Yamamura Y."/>
            <person name="Yuan S."/>
            <person name="Shinozaki K."/>
            <person name="Davis R.W."/>
            <person name="Theologis A."/>
            <person name="Ecker J.R."/>
        </authorList>
    </citation>
    <scope>NUCLEOTIDE SEQUENCE [LARGE SCALE MRNA]</scope>
    <source>
        <strain>cv. Columbia</strain>
    </source>
</reference>
<reference key="4">
    <citation type="submission" date="2006-08" db="EMBL/GenBank/DDBJ databases">
        <title>Arabidopsis ORF Clones.</title>
        <authorList>
            <person name="Quinitio C."/>
            <person name="Chen H."/>
            <person name="Kim C.J."/>
            <person name="Shinn P."/>
            <person name="Ecker J.R."/>
        </authorList>
    </citation>
    <scope>NUCLEOTIDE SEQUENCE [LARGE SCALE MRNA]</scope>
    <source>
        <strain>cv. Columbia</strain>
    </source>
</reference>
<reference key="5">
    <citation type="online journal article" date="1999" name="Plant Gene Register">
        <title>A transcribed sequence from Arabidopsis thaliana is a member of a novel phylogenetically widespread gene family of hypothetical multipass membrane proteins with unknown function.</title>
        <authorList>
            <person name="Muren E."/>
            <person name="Josefsson L.G."/>
        </authorList>
        <locator>PGR99-032</locator>
    </citation>
    <scope>NUCLEOTIDE SEQUENCE [MRNA] OF 70-458</scope>
</reference>
<comment type="subcellular location">
    <subcellularLocation>
        <location evidence="1">Membrane</location>
        <topology evidence="1">Multi-pass membrane protein</topology>
    </subcellularLocation>
</comment>
<comment type="similarity">
    <text evidence="2">Belongs to the 4-toluene sulfonate uptake permease (TSUP) (TC 2.A.102) family.</text>
</comment>
<proteinExistence type="evidence at transcript level"/>
<dbReference type="EMBL" id="AC005882">
    <property type="protein sequence ID" value="AAD21419.1"/>
    <property type="molecule type" value="Genomic_DNA"/>
</dbReference>
<dbReference type="EMBL" id="CP002684">
    <property type="protein sequence ID" value="AEE33881.1"/>
    <property type="molecule type" value="Genomic_DNA"/>
</dbReference>
<dbReference type="EMBL" id="AF325103">
    <property type="protein sequence ID" value="AAK17171.1"/>
    <property type="molecule type" value="mRNA"/>
</dbReference>
<dbReference type="EMBL" id="BT026498">
    <property type="protein sequence ID" value="ABH04605.1"/>
    <property type="molecule type" value="mRNA"/>
</dbReference>
<dbReference type="EMBL" id="AJ131722">
    <property type="protein sequence ID" value="CAA10487.1"/>
    <property type="molecule type" value="mRNA"/>
</dbReference>
<dbReference type="PIR" id="B96643">
    <property type="entry name" value="B96643"/>
</dbReference>
<dbReference type="PIR" id="T51355">
    <property type="entry name" value="T51355"/>
</dbReference>
<dbReference type="RefSeq" id="NP_176367.1">
    <property type="nucleotide sequence ID" value="NM_104856.4"/>
</dbReference>
<dbReference type="FunCoup" id="Q9SYB0">
    <property type="interactions" value="5"/>
</dbReference>
<dbReference type="IntAct" id="Q9SYB0">
    <property type="interactions" value="1"/>
</dbReference>
<dbReference type="STRING" id="3702.Q9SYB0"/>
<dbReference type="PaxDb" id="3702-AT1G61740.1"/>
<dbReference type="ProteomicsDB" id="234236"/>
<dbReference type="EnsemblPlants" id="AT1G61740.1">
    <property type="protein sequence ID" value="AT1G61740.1"/>
    <property type="gene ID" value="AT1G61740"/>
</dbReference>
<dbReference type="GeneID" id="842471"/>
<dbReference type="Gramene" id="AT1G61740.1">
    <property type="protein sequence ID" value="AT1G61740.1"/>
    <property type="gene ID" value="AT1G61740"/>
</dbReference>
<dbReference type="KEGG" id="ath:AT1G61740"/>
<dbReference type="Araport" id="AT1G61740"/>
<dbReference type="TAIR" id="AT1G61740"/>
<dbReference type="eggNOG" id="ENOG502QUAQ">
    <property type="taxonomic scope" value="Eukaryota"/>
</dbReference>
<dbReference type="HOGENOM" id="CLU_029011_2_1_1"/>
<dbReference type="InParanoid" id="Q9SYB0"/>
<dbReference type="OMA" id="MRNNFVP"/>
<dbReference type="PhylomeDB" id="Q9SYB0"/>
<dbReference type="PRO" id="PR:Q9SYB0"/>
<dbReference type="Proteomes" id="UP000006548">
    <property type="component" value="Chromosome 1"/>
</dbReference>
<dbReference type="ExpressionAtlas" id="Q9SYB0">
    <property type="expression patterns" value="baseline and differential"/>
</dbReference>
<dbReference type="GO" id="GO:0016020">
    <property type="term" value="C:membrane"/>
    <property type="evidence" value="ECO:0007669"/>
    <property type="project" value="UniProtKB-SubCell"/>
</dbReference>
<dbReference type="InterPro" id="IPR002781">
    <property type="entry name" value="TM_pro_TauE-like"/>
</dbReference>
<dbReference type="PANTHER" id="PTHR14255">
    <property type="entry name" value="CEREBLON"/>
    <property type="match status" value="1"/>
</dbReference>
<dbReference type="PANTHER" id="PTHR14255:SF59">
    <property type="entry name" value="SULFITE EXPORTER TAUE_SAFE FAMILY PROTEIN 1-RELATED"/>
    <property type="match status" value="1"/>
</dbReference>
<dbReference type="Pfam" id="PF01925">
    <property type="entry name" value="TauE"/>
    <property type="match status" value="2"/>
</dbReference>
<sequence>MRNNFVPIILSFIIFLTPSIAEQEPSILSPVDQLLNKTSSYLDFSTKFNQPRIELTTSTIIAGLLSFLASSISSAGGIGGGGLYVPIMTIVAGLDLKTASSFSAFMVTGGSIANVGCNLFVRNPKSGGKTLIDFDLALLLEPCMLLGVSIGVICNLVFPNWLITSLFAVFLAWSTLKTFGNGLYYWRLESEMVKIRESNRIEEDDEEDKIESLKLPLLEDYQRPKRFPWIKLGVLVIIWLSYFAVYLLRGNKYGEGIISIEPCGNAYWLISSSQIPLTLFFTLWICFSDNVQSQQQSDYHVSVKDVEDLRSNDGARSNKCMFPVMALLAGVLGGVFGIGGGMLISPLLLQVGIAPEVTAATCSFMVLFSSTMSAIQYLLLGMEHTGTASIFAVICFVASLVGLKVVQKVITEYGRASIIVFSVGIVMALSIVLMTSYGALDVWNDYVSGRYMGFKLPC</sequence>
<feature type="chain" id="PRO_5009348888" description="Sulfite exporter TauE/SafE family protein 2" evidence="1">
    <location>
        <begin position="1"/>
        <end position="458"/>
    </location>
</feature>
<feature type="transmembrane region" description="Helical" evidence="1">
    <location>
        <begin position="5"/>
        <end position="25"/>
    </location>
</feature>
<feature type="transmembrane region" description="Helical" evidence="1">
    <location>
        <begin position="53"/>
        <end position="73"/>
    </location>
</feature>
<feature type="transmembrane region" description="Helical" evidence="1">
    <location>
        <begin position="74"/>
        <end position="94"/>
    </location>
</feature>
<feature type="transmembrane region" description="Helical" evidence="1">
    <location>
        <begin position="101"/>
        <end position="121"/>
    </location>
</feature>
<feature type="transmembrane region" description="Helical" evidence="1">
    <location>
        <begin position="128"/>
        <end position="148"/>
    </location>
</feature>
<feature type="transmembrane region" description="Helical" evidence="1">
    <location>
        <begin position="150"/>
        <end position="170"/>
    </location>
</feature>
<feature type="transmembrane region" description="Helical" evidence="1">
    <location>
        <begin position="227"/>
        <end position="247"/>
    </location>
</feature>
<feature type="transmembrane region" description="Helical" evidence="1">
    <location>
        <begin position="267"/>
        <end position="287"/>
    </location>
</feature>
<feature type="transmembrane region" description="Helical" evidence="1">
    <location>
        <begin position="324"/>
        <end position="344"/>
    </location>
</feature>
<feature type="transmembrane region" description="Helical" evidence="1">
    <location>
        <begin position="348"/>
        <end position="368"/>
    </location>
</feature>
<feature type="transmembrane region" description="Helical" evidence="1">
    <location>
        <begin position="386"/>
        <end position="406"/>
    </location>
</feature>
<feature type="transmembrane region" description="Helical" evidence="1">
    <location>
        <begin position="418"/>
        <end position="438"/>
    </location>
</feature>
<organism>
    <name type="scientific">Arabidopsis thaliana</name>
    <name type="common">Mouse-ear cress</name>
    <dbReference type="NCBI Taxonomy" id="3702"/>
    <lineage>
        <taxon>Eukaryota</taxon>
        <taxon>Viridiplantae</taxon>
        <taxon>Streptophyta</taxon>
        <taxon>Embryophyta</taxon>
        <taxon>Tracheophyta</taxon>
        <taxon>Spermatophyta</taxon>
        <taxon>Magnoliopsida</taxon>
        <taxon>eudicotyledons</taxon>
        <taxon>Gunneridae</taxon>
        <taxon>Pentapetalae</taxon>
        <taxon>rosids</taxon>
        <taxon>malvids</taxon>
        <taxon>Brassicales</taxon>
        <taxon>Brassicaceae</taxon>
        <taxon>Camelineae</taxon>
        <taxon>Arabidopsis</taxon>
    </lineage>
</organism>